<organism>
    <name type="scientific">Mycolicibacterium fortuitum</name>
    <name type="common">Mycobacterium fortuitum</name>
    <dbReference type="NCBI Taxonomy" id="1766"/>
    <lineage>
        <taxon>Bacteria</taxon>
        <taxon>Bacillati</taxon>
        <taxon>Actinomycetota</taxon>
        <taxon>Actinomycetes</taxon>
        <taxon>Mycobacteriales</taxon>
        <taxon>Mycobacteriaceae</taxon>
        <taxon>Mycolicibacterium</taxon>
    </lineage>
</organism>
<gene>
    <name type="primary">fur2</name>
    <name type="synonym">furA II</name>
</gene>
<comment type="function">
    <text evidence="1">Acts as a global negative controlling element, employing Fe(2+) as a cofactor to bind the operator of the repressed genes.</text>
</comment>
<comment type="subcellular location">
    <subcellularLocation>
        <location evidence="1">Cytoplasm</location>
    </subcellularLocation>
</comment>
<comment type="similarity">
    <text evidence="2">Belongs to the Fur family.</text>
</comment>
<keyword id="KW-0963">Cytoplasm</keyword>
<keyword id="KW-0238">DNA-binding</keyword>
<keyword id="KW-0408">Iron</keyword>
<keyword id="KW-0479">Metal-binding</keyword>
<keyword id="KW-0678">Repressor</keyword>
<keyword id="KW-0804">Transcription</keyword>
<keyword id="KW-0805">Transcription regulation</keyword>
<keyword id="KW-0862">Zinc</keyword>
<evidence type="ECO:0000250" key="1"/>
<evidence type="ECO:0000305" key="2"/>
<protein>
    <recommendedName>
        <fullName>Ferric uptake regulation protein 2</fullName>
        <shortName>Ferric uptake regulator 2</shortName>
    </recommendedName>
</protein>
<name>FUR2_MYCFO</name>
<sequence length="146" mass="15944">MSTTADFQQMLRXADLRVTRPRVAVLHAVHXXTRDADTETIIRSVREDLPEVSHQAVYDSLHALTAAALVRRIQPSGSVVSRYESRIGDNHHHVVCRSCGAIADVDCSXAGSAPCLTASEDHGFEIDEAEVIYWGTCPECSVAPSR</sequence>
<proteinExistence type="inferred from homology"/>
<reference key="1">
    <citation type="submission" date="1998-04" db="EMBL/GenBank/DDBJ databases">
        <authorList>
            <person name="Menendez M.C."/>
        </authorList>
    </citation>
    <scope>NUCLEOTIDE SEQUENCE [GENOMIC DNA]</scope>
    <source>
        <strain>ATCC 6841 / DSM 46621 / CIP 104534 / JCM 6387 / KCTC 9510 / NBRC 13159 / NCTC 10394</strain>
    </source>
</reference>
<accession>O69451</accession>
<feature type="chain" id="PRO_0000095561" description="Ferric uptake regulation protein 2">
    <location>
        <begin position="1"/>
        <end position="146"/>
    </location>
</feature>
<feature type="binding site" evidence="1">
    <location>
        <position position="96"/>
    </location>
    <ligand>
        <name>Zn(2+)</name>
        <dbReference type="ChEBI" id="CHEBI:29105"/>
    </ligand>
</feature>
<feature type="binding site" evidence="1">
    <location>
        <position position="99"/>
    </location>
    <ligand>
        <name>Zn(2+)</name>
        <dbReference type="ChEBI" id="CHEBI:29105"/>
    </ligand>
</feature>
<dbReference type="EMBL" id="Y17062">
    <property type="protein sequence ID" value="CAA76610.1"/>
    <property type="molecule type" value="Genomic_DNA"/>
</dbReference>
<dbReference type="STRING" id="1766.XA26_57670"/>
<dbReference type="GO" id="GO:0005737">
    <property type="term" value="C:cytoplasm"/>
    <property type="evidence" value="ECO:0007669"/>
    <property type="project" value="UniProtKB-SubCell"/>
</dbReference>
<dbReference type="GO" id="GO:0003700">
    <property type="term" value="F:DNA-binding transcription factor activity"/>
    <property type="evidence" value="ECO:0007669"/>
    <property type="project" value="InterPro"/>
</dbReference>
<dbReference type="GO" id="GO:0000976">
    <property type="term" value="F:transcription cis-regulatory region binding"/>
    <property type="evidence" value="ECO:0007669"/>
    <property type="project" value="TreeGrafter"/>
</dbReference>
<dbReference type="GO" id="GO:0008270">
    <property type="term" value="F:zinc ion binding"/>
    <property type="evidence" value="ECO:0007669"/>
    <property type="project" value="TreeGrafter"/>
</dbReference>
<dbReference type="GO" id="GO:0045892">
    <property type="term" value="P:negative regulation of DNA-templated transcription"/>
    <property type="evidence" value="ECO:0007669"/>
    <property type="project" value="TreeGrafter"/>
</dbReference>
<dbReference type="GO" id="GO:1900376">
    <property type="term" value="P:regulation of secondary metabolite biosynthetic process"/>
    <property type="evidence" value="ECO:0007669"/>
    <property type="project" value="TreeGrafter"/>
</dbReference>
<dbReference type="CDD" id="cd07153">
    <property type="entry name" value="Fur_like"/>
    <property type="match status" value="1"/>
</dbReference>
<dbReference type="Gene3D" id="3.30.1490.190">
    <property type="match status" value="1"/>
</dbReference>
<dbReference type="Gene3D" id="1.10.10.10">
    <property type="entry name" value="Winged helix-like DNA-binding domain superfamily/Winged helix DNA-binding domain"/>
    <property type="match status" value="1"/>
</dbReference>
<dbReference type="InterPro" id="IPR002481">
    <property type="entry name" value="FUR"/>
</dbReference>
<dbReference type="InterPro" id="IPR043135">
    <property type="entry name" value="Fur_C"/>
</dbReference>
<dbReference type="InterPro" id="IPR036388">
    <property type="entry name" value="WH-like_DNA-bd_sf"/>
</dbReference>
<dbReference type="InterPro" id="IPR036390">
    <property type="entry name" value="WH_DNA-bd_sf"/>
</dbReference>
<dbReference type="PANTHER" id="PTHR33202:SF18">
    <property type="entry name" value="TRANSCRIPTIONAL REGULATOR FURA"/>
    <property type="match status" value="1"/>
</dbReference>
<dbReference type="PANTHER" id="PTHR33202">
    <property type="entry name" value="ZINC UPTAKE REGULATION PROTEIN"/>
    <property type="match status" value="1"/>
</dbReference>
<dbReference type="Pfam" id="PF01475">
    <property type="entry name" value="FUR"/>
    <property type="match status" value="1"/>
</dbReference>
<dbReference type="SUPFAM" id="SSF46785">
    <property type="entry name" value="Winged helix' DNA-binding domain"/>
    <property type="match status" value="1"/>
</dbReference>